<feature type="chain" id="PRO_0000221250" description="Histone H3.2">
    <location>
        <begin position="1"/>
        <end position="136"/>
    </location>
</feature>
<feature type="region of interest" description="Disordered" evidence="6">
    <location>
        <begin position="1"/>
        <end position="43"/>
    </location>
</feature>
<feature type="modified residue" description="Asymmetric dimethylarginine; by PRMT6; alternate" evidence="5">
    <location>
        <position position="3"/>
    </location>
</feature>
<feature type="modified residue" description="Citrulline; alternate" evidence="13">
    <location>
        <position position="3"/>
    </location>
</feature>
<feature type="modified residue" description="Phosphothreonine; by HASPIN and VRK1" evidence="5 16">
    <location>
        <position position="4"/>
    </location>
</feature>
<feature type="modified residue" description="Allysine; alternate" evidence="5">
    <location>
        <position position="5"/>
    </location>
</feature>
<feature type="modified residue" description="N6,N6,N6-trimethyllysine; alternate" evidence="21">
    <location>
        <position position="5"/>
    </location>
</feature>
<feature type="modified residue" description="N6,N6-dimethyllysine; alternate" evidence="21">
    <location>
        <position position="5"/>
    </location>
</feature>
<feature type="modified residue" description="N6-(2-hydroxyisobutyryl)lysine; alternate" evidence="25">
    <location>
        <position position="5"/>
    </location>
</feature>
<feature type="modified residue" description="N6-(beta-hydroxybutyryl)lysine; alternate" evidence="27">
    <location>
        <position position="5"/>
    </location>
</feature>
<feature type="modified residue" description="N6-acetyllysine; alternate" evidence="21">
    <location>
        <position position="5"/>
    </location>
</feature>
<feature type="modified residue" description="N6-crotonyllysine; alternate" evidence="23">
    <location>
        <position position="5"/>
    </location>
</feature>
<feature type="modified residue" description="N6-methyllysine; alternate" evidence="21">
    <location>
        <position position="5"/>
    </location>
</feature>
<feature type="modified residue" description="5-glutamyl dopamine; alternate" evidence="5">
    <location>
        <position position="6"/>
    </location>
</feature>
<feature type="modified residue" description="5-glutamyl serotonin; alternate" evidence="29">
    <location>
        <position position="6"/>
    </location>
</feature>
<feature type="modified residue" description="Phosphothreonine; by PKC" evidence="5">
    <location>
        <position position="7"/>
    </location>
</feature>
<feature type="modified residue" description="Citrulline; alternate" evidence="13">
    <location>
        <position position="9"/>
    </location>
</feature>
<feature type="modified residue" description="Symmetric dimethylarginine; by PRMT5; alternate" evidence="14">
    <location>
        <position position="9"/>
    </location>
</feature>
<feature type="modified residue" description="N6,N6,N6-trimethyllysine; alternate" evidence="12 21">
    <location>
        <position position="10"/>
    </location>
</feature>
<feature type="modified residue" description="N6,N6-dimethyllysine; alternate" evidence="12 21">
    <location>
        <position position="10"/>
    </location>
</feature>
<feature type="modified residue" description="N6-(2-hydroxyisobutyryl)lysine; alternate" evidence="25">
    <location>
        <position position="10"/>
    </location>
</feature>
<feature type="modified residue" description="N6-(beta-hydroxybutyryl)lysine; alternate" evidence="27">
    <location>
        <position position="10"/>
    </location>
</feature>
<feature type="modified residue" description="N6-acetyllysine; alternate" evidence="14 21">
    <location>
        <position position="10"/>
    </location>
</feature>
<feature type="modified residue" description="N6-crotonyllysine; alternate" evidence="23">
    <location>
        <position position="10"/>
    </location>
</feature>
<feature type="modified residue" description="N6-lactoyllysine; alternate" evidence="5">
    <location>
        <position position="10"/>
    </location>
</feature>
<feature type="modified residue" description="N6-methyllysine; alternate" evidence="12 21">
    <location>
        <position position="10"/>
    </location>
</feature>
<feature type="modified residue" description="ADP-ribosylserine; alternate" evidence="2">
    <location>
        <position position="11"/>
    </location>
</feature>
<feature type="modified residue" description="Phosphoserine; alternate; by AURKB, AURKC, RPS6KA3, RPS6KA4 and RPS6KA5" evidence="7 10 16 18 19">
    <location>
        <position position="11"/>
    </location>
</feature>
<feature type="modified residue" description="Phosphothreonine; by PKC" evidence="2">
    <location>
        <position position="12"/>
    </location>
</feature>
<feature type="modified residue" description="N6-(2-hydroxyisobutyryl)lysine; alternate" evidence="25">
    <location>
        <position position="15"/>
    </location>
</feature>
<feature type="modified residue" description="N6-(beta-hydroxybutyryl)lysine; alternate" evidence="27">
    <location>
        <position position="15"/>
    </location>
</feature>
<feature type="modified residue" description="N6-acetyllysine; alternate" evidence="11 12 21">
    <location>
        <position position="15"/>
    </location>
</feature>
<feature type="modified residue" description="N6-glutaryllysine; alternate" evidence="5">
    <location>
        <position position="15"/>
    </location>
</feature>
<feature type="modified residue" description="N6-lactoyllysine; alternate" evidence="30">
    <location>
        <position position="15"/>
    </location>
</feature>
<feature type="modified residue" description="N6-succinyllysine; alternate" evidence="5">
    <location>
        <position position="15"/>
    </location>
</feature>
<feature type="modified residue" description="Asymmetric dimethylarginine; by CARM1; alternate" evidence="9 11 15">
    <location>
        <position position="18"/>
    </location>
</feature>
<feature type="modified residue" description="Citrulline; alternate" evidence="13">
    <location>
        <position position="18"/>
    </location>
</feature>
<feature type="modified residue" description="N6-(2-hydroxyisobutyryl)lysine; alternate" evidence="25">
    <location>
        <position position="19"/>
    </location>
</feature>
<feature type="modified residue" description="N6-(beta-hydroxybutyryl)lysine; alternate" evidence="27">
    <location>
        <position position="19"/>
    </location>
</feature>
<feature type="modified residue" description="N6-acetyllysine; alternate" evidence="11 12 21 28">
    <location>
        <position position="19"/>
    </location>
</feature>
<feature type="modified residue" description="N6-butyryllysine; alternate" evidence="26">
    <location>
        <position position="19"/>
    </location>
</feature>
<feature type="modified residue" description="N6-crotonyllysine; alternate" evidence="23 28">
    <location>
        <position position="19"/>
    </location>
</feature>
<feature type="modified residue" description="N6-glutaryllysine; alternate" evidence="5">
    <location>
        <position position="19"/>
    </location>
</feature>
<feature type="modified residue" description="N6-lactoyllysine; alternate" evidence="30">
    <location>
        <position position="19"/>
    </location>
</feature>
<feature type="modified residue" description="N6-methyllysine; alternate" evidence="21">
    <location>
        <position position="19"/>
    </location>
</feature>
<feature type="modified residue" description="N6-(2-hydroxyisobutyryl)lysine; alternate" evidence="25">
    <location>
        <position position="24"/>
    </location>
</feature>
<feature type="modified residue" description="N6-(beta-hydroxybutyryl)lysine; alternate" evidence="27">
    <location>
        <position position="24"/>
    </location>
</feature>
<feature type="modified residue" description="N6-acetyllysine; alternate" evidence="11 12 21">
    <location>
        <position position="24"/>
    </location>
</feature>
<feature type="modified residue" description="N6-butyryllysine; alternate" evidence="26">
    <location>
        <position position="24"/>
    </location>
</feature>
<feature type="modified residue" description="N6-crotonyllysine; alternate" evidence="23">
    <location>
        <position position="24"/>
    </location>
</feature>
<feature type="modified residue" description="N6-glutaryllysine; alternate" evidence="5">
    <location>
        <position position="24"/>
    </location>
</feature>
<feature type="modified residue" description="N6-lactoyllysine; alternate" evidence="30">
    <location>
        <position position="24"/>
    </location>
</feature>
<feature type="modified residue" description="N6-methyllysine; alternate" evidence="21">
    <location>
        <position position="24"/>
    </location>
</feature>
<feature type="modified residue" description="Citrulline" evidence="13">
    <location>
        <position position="27"/>
    </location>
</feature>
<feature type="modified residue" description="N6,N6,N6-trimethyllysine; alternate" evidence="12 21">
    <location>
        <position position="28"/>
    </location>
</feature>
<feature type="modified residue" description="N6,N6-dimethyllysine; alternate" evidence="12 21">
    <location>
        <position position="28"/>
    </location>
</feature>
<feature type="modified residue" description="N6-(2-hydroxyisobutyryl)lysine; alternate" evidence="25">
    <location>
        <position position="28"/>
    </location>
</feature>
<feature type="modified residue" description="N6-acetyllysine; alternate" evidence="21">
    <location>
        <position position="28"/>
    </location>
</feature>
<feature type="modified residue" description="N6-butyryllysine; alternate" evidence="26">
    <location>
        <position position="28"/>
    </location>
</feature>
<feature type="modified residue" description="N6-crotonyllysine; alternate" evidence="23">
    <location>
        <position position="28"/>
    </location>
</feature>
<feature type="modified residue" description="N6-glutaryllysine; alternate" evidence="5">
    <location>
        <position position="28"/>
    </location>
</feature>
<feature type="modified residue" description="N6-lactoyllysine; alternate" evidence="30">
    <location>
        <position position="28"/>
    </location>
</feature>
<feature type="modified residue" description="N6-methyllysine; alternate" evidence="12 21">
    <location>
        <position position="28"/>
    </location>
</feature>
<feature type="modified residue" description="ADP-ribosylserine; alternate" evidence="2">
    <location>
        <position position="29"/>
    </location>
</feature>
<feature type="modified residue" description="Phosphoserine; alternate; by AURKB, AURKC and RPS6KA5" evidence="7 8 10 17 18 19">
    <location>
        <position position="29"/>
    </location>
</feature>
<feature type="modified residue" description="N6,N6,N6-trimethyllysine; alternate" evidence="5">
    <location>
        <position position="37"/>
    </location>
</feature>
<feature type="modified residue" description="N6,N6-dimethyllysine; alternate" evidence="12 21">
    <location>
        <position position="37"/>
    </location>
</feature>
<feature type="modified residue" description="N6-(2-hydroxyisobutyryl)lysine; alternate" evidence="25">
    <location>
        <position position="37"/>
    </location>
</feature>
<feature type="modified residue" description="N6-acetyllysine; alternate" evidence="20">
    <location>
        <position position="37"/>
    </location>
</feature>
<feature type="modified residue" description="N6-butyryllysine; alternate" evidence="26">
    <location>
        <position position="37"/>
    </location>
</feature>
<feature type="modified residue" description="N6-methyllysine; alternate" evidence="12 21">
    <location>
        <position position="37"/>
    </location>
</feature>
<feature type="modified residue" description="N6-butyryllysine; alternate" evidence="26">
    <location>
        <position position="38"/>
    </location>
</feature>
<feature type="modified residue" description="N6-methyllysine; alternate" evidence="2">
    <location>
        <position position="38"/>
    </location>
</feature>
<feature type="modified residue" description="Phosphotyrosine" evidence="5">
    <location>
        <position position="42"/>
    </location>
</feature>
<feature type="modified residue" description="N6,N6,N6-trimethyllysine; alternate" evidence="5">
    <location>
        <position position="57"/>
    </location>
</feature>
<feature type="modified residue" description="N6-(2-hydroxyisobutyryl)lysine; alternate" evidence="25">
    <location>
        <position position="57"/>
    </location>
</feature>
<feature type="modified residue" description="N6-(beta-hydroxybutyryl)lysine; alternate" evidence="27">
    <location>
        <position position="57"/>
    </location>
</feature>
<feature type="modified residue" description="N6-acetyllysine; alternate" evidence="5">
    <location>
        <position position="57"/>
    </location>
</feature>
<feature type="modified residue" description="N6-crotonyllysine; alternate" evidence="23">
    <location>
        <position position="57"/>
    </location>
</feature>
<feature type="modified residue" description="N6-glutaryllysine; alternate" evidence="5">
    <location>
        <position position="57"/>
    </location>
</feature>
<feature type="modified residue" description="N6-lactoyllysine; alternate" evidence="30">
    <location>
        <position position="57"/>
    </location>
</feature>
<feature type="modified residue" description="N6-methyllysine; by EHMT2; alternate" evidence="5">
    <location>
        <position position="57"/>
    </location>
</feature>
<feature type="modified residue" description="N6-succinyllysine; alternate" evidence="24">
    <location>
        <position position="57"/>
    </location>
</feature>
<feature type="modified residue" description="Phosphoserine" evidence="5">
    <location>
        <position position="58"/>
    </location>
</feature>
<feature type="modified residue" description="N6-(2-hydroxyisobutyryl)lysine; alternate" evidence="25">
    <location>
        <position position="65"/>
    </location>
</feature>
<feature type="modified residue" description="N6-methyllysine; alternate" evidence="5">
    <location>
        <position position="65"/>
    </location>
</feature>
<feature type="modified residue" description="N6,N6,N6-trimethyllysine; alternate" evidence="12 21">
    <location>
        <position position="80"/>
    </location>
</feature>
<feature type="modified residue" description="N6,N6-dimethyllysine; alternate" evidence="12 21">
    <location>
        <position position="80"/>
    </location>
</feature>
<feature type="modified residue" description="N6-(2-hydroxyisobutyryl)lysine; alternate" evidence="25">
    <location>
        <position position="80"/>
    </location>
</feature>
<feature type="modified residue" description="N6-acetyllysine; alternate" evidence="5">
    <location>
        <position position="80"/>
    </location>
</feature>
<feature type="modified residue" description="N6-butyryllysine; alternate" evidence="26">
    <location>
        <position position="80"/>
    </location>
</feature>
<feature type="modified residue" description="N6-glutaryllysine; alternate" evidence="5">
    <location>
        <position position="80"/>
    </location>
</feature>
<feature type="modified residue" description="N6-lactoyllysine; alternate" evidence="5">
    <location>
        <position position="80"/>
    </location>
</feature>
<feature type="modified residue" description="N6-methyllysine; alternate" evidence="12 21">
    <location>
        <position position="80"/>
    </location>
</feature>
<feature type="modified residue" description="N6-succinyllysine; alternate" evidence="24">
    <location>
        <position position="80"/>
    </location>
</feature>
<feature type="modified residue" description="Phosphothreonine" evidence="5">
    <location>
        <position position="81"/>
    </location>
</feature>
<feature type="modified residue" description="Phosphoserine" evidence="3">
    <location>
        <position position="87"/>
    </location>
</feature>
<feature type="modified residue" description="Phosphothreonine" evidence="5">
    <location>
        <position position="108"/>
    </location>
</feature>
<feature type="modified residue" description="N6-acetyllysine; alternate" evidence="5">
    <location>
        <position position="116"/>
    </location>
</feature>
<feature type="modified residue" description="N6-glutaryllysine; alternate" evidence="5">
    <location>
        <position position="116"/>
    </location>
</feature>
<feature type="modified residue" description="N6-(2-hydroxyisobutyryl)lysine; alternate" evidence="25">
    <location>
        <position position="123"/>
    </location>
</feature>
<feature type="modified residue" description="N6-acetyllysine; alternate" evidence="5">
    <location>
        <position position="123"/>
    </location>
</feature>
<feature type="modified residue" description="N6-butyryllysine; alternate" evidence="26">
    <location>
        <position position="123"/>
    </location>
</feature>
<feature type="modified residue" description="N6-glutaryllysine; alternate" evidence="5">
    <location>
        <position position="123"/>
    </location>
</feature>
<feature type="modified residue" description="N6-methyllysine; alternate" evidence="32">
    <location>
        <position position="123"/>
    </location>
</feature>
<feature type="modified residue" description="N6-succinyllysine; alternate" evidence="5">
    <location>
        <position position="123"/>
    </location>
</feature>
<feature type="lipid moiety-binding region" description="N6-decanoyllysine" evidence="5">
    <location>
        <position position="19"/>
    </location>
</feature>
<feature type="lipid moiety-binding region" description="S-palmitoyl cysteine" evidence="5">
    <location>
        <position position="111"/>
    </location>
</feature>
<feature type="strand" evidence="41">
    <location>
        <begin position="4"/>
        <end position="6"/>
    </location>
</feature>
<protein>
    <recommendedName>
        <fullName>Histone H3.2</fullName>
    </recommendedName>
    <alternativeName>
        <fullName evidence="38">H3-clustered histone 13</fullName>
    </alternativeName>
    <alternativeName>
        <fullName evidence="39">H3-clustered histone 14</fullName>
    </alternativeName>
    <alternativeName>
        <fullName evidence="40">H3-clustered histone 15</fullName>
    </alternativeName>
    <alternativeName>
        <fullName evidence="33">H3-clustered histone 2</fullName>
    </alternativeName>
    <alternativeName>
        <fullName evidence="34">H3-clustered histone 3</fullName>
    </alternativeName>
    <alternativeName>
        <fullName evidence="35">H3-clustered histone 4</fullName>
    </alternativeName>
    <alternativeName>
        <fullName evidence="36">H3-clustered histone 6</fullName>
    </alternativeName>
    <alternativeName>
        <fullName evidence="37">H3-clustered histone 7</fullName>
    </alternativeName>
</protein>
<comment type="function">
    <text>Core component of nucleosome. Nucleosomes wrap and compact DNA into chromatin, limiting DNA accessibility to the cellular machineries which require DNA as a template. Histones thereby play a central role in transcription regulation, DNA repair, DNA replication and chromosomal stability. DNA accessibility is regulated via a complex set of post-translational modifications of histones, also called histone code, and nucleosome remodeling.</text>
</comment>
<comment type="subunit">
    <text evidence="5">The nucleosome is a histone octamer containing two molecules each of H2A, H2B, H3 and H4 assembled in one H3-H4 heterotetramer and two H2A-H2B heterodimers (By similarity). The octamer wraps approximately 147 bp of DNA (By similarity). During nucleosome assembly the chaperone ASF1A interacts with the histone H3-H4 heterodimer (via C-terminus of H3); this interaction is direct (By similarity). Interacts with DNAJC9, CHAF1A and CHAF1B (By similarity). Interacts with NASP; NASP is a histone chaperone that stabilizes and maintains a soluble pool of Histone H3-H4 dimers (By similarity).</text>
</comment>
<comment type="interaction">
    <interactant intactId="EBI-2658213">
        <id>P84228</id>
    </interactant>
    <interactant intactId="EBI-15815652">
        <id>Q8TF76-1</id>
        <label>HASPIN</label>
    </interactant>
    <organismsDiffer>true</organismsDiffer>
    <experiments>3</experiments>
</comment>
<comment type="subcellular location">
    <subcellularLocation>
        <location>Nucleus</location>
    </subcellularLocation>
    <subcellularLocation>
        <location>Chromosome</location>
    </subcellularLocation>
</comment>
<comment type="developmental stage">
    <text>Expressed during S phase, then expression strongly decreases as cell division slows down during the process of differentiation.</text>
</comment>
<comment type="PTM">
    <text evidence="9 11 12 14 15 21">Acetylation is generally linked to gene activation. Acetylation on Lys-10 (H3K9ac) impairs methylation at Arg-9 (H3R8me2s). Acetylation on Lys-19 (H3K18ac) and Lys-24 (H3K24ac) favors methylation at Arg-18 (H3R17me). Acetylation at Lys-123 (H3K122ac) by EP300/p300 plays a central role in chromatin structure: localizes at the surface of the histone octamer and stimulates transcription, possibly by promoting nucleosome instability.</text>
</comment>
<comment type="PTM">
    <text evidence="9 11 13 14 15">Citrullination at Arg-9 (H3R8ci) and/or Arg-18 (H3R17ci) by PADI4 impairs methylation and represses transcription.</text>
</comment>
<comment type="PTM">
    <text evidence="1">Asymmetric dimethylation at Arg-18 (H3R17me2a) by CARM1 is linked to gene activation. Symmetric dimethylation at Arg-9 (H3R8me2s) by PRMT5 is linked to gene repression. Asymmetric dimethylation at Arg-3 (H3R2me2a) by PRMT6 is linked to gene repression and is mutually exclusive with H3 Lys-5 methylation (H3K4me2 and H3K4me3). H3R2me2a is present at the 3' of genes regardless of their transcription state and is enriched on inactive promoters, while it is absent on active promoters (By similarity).</text>
</comment>
<comment type="PTM">
    <text evidence="7 10 12 14 16 18 19 20 21">Methylation at Lys-5 (H3K4me), Lys-37 (H3K36me) and Lys-80 (H3K79me) are linked to gene activation. Methylation at Lys-5 (H3K4me) facilitates subsequent acetylation of H3 and H4. Methylation at Lys-80 (H3K79me) is associated with DNA double-strand break (DSB) responses and is a specific target for TP53BP1. Methylation at Lys-10 (H3K9me) and Lys-28 (H3K27me) are linked to gene repression. Methylation at Lys-10 (H3K9me) is a specific target for HP1 proteins (CBX1, CBX3 and CBX5) and prevents subsequent phosphorylation at Ser-11 (H3S10ph) and acetylation of H3 and H4. Methylation at Lys-5 (H3K4me) and Lys-80 (H3K79me) require preliminary monoubiquitination of H2B at 'Lys-120'. Methylation at Lys-10 (H3K9me) and Lys-28 (H3K27me) are enriched in inactive X chromosome chromatin. Monomethylation at Lys-57 (H3K56me1) by EHMT2/G9A in G1 phase promotes interaction with PCNA and is required for DNA replication.</text>
</comment>
<comment type="PTM">
    <text evidence="5 7 8 10 12 14 16 17 18 19 21">Phosphorylated at Thr-4 (H3T3ph) by VRK1 (By similarity). Phosphorylated at Thr-4 (H3T3ph) by HASPIN during prophase and dephosphorylated during anaphase. Phosphorylation at Ser-11 (H3S10ph) by AURKB is crucial for chromosome condensation and cell-cycle progression during mitosis and meiosis. In addition phosphorylation at Ser-11 (H3S10ph) by RPS6KA4 and RPS6KA5 is important during interphase because it enables the transcription of genes following external stimulation, like mitogens, stress, growth factors or UV irradiation and result in the activation of genes, such as c-fos and c-jun. Phosphorylation at Ser-11 (H3S10ph), which is linked to gene activation, prevents methylation at Lys-10 (H3K9me) but facilitates acetylation of H3 and H4. Phosphorylation at Ser-11 (H3S10ph) by AURKB mediates the dissociation of HP1 proteins (CBX1, CBX3 and CBX5) from heterochromatin. Phosphorylation at Ser-11 (H3S10ph) is also an essential regulatory mechanism for neoplastic cell transformation. Phosphorylated at Ser-29 (H3S28ph) by MAP3K20 isoform 1, RPS6KA5 or AURKB during mitosis or upon ultraviolet B irradiation. Phosphorylation at Thr-7 (H3T6ph) by PRKCB is a specific tag for epigenetic transcriptional activation that prevents demethylation of Lys-5 (H3K4me) by LSD1/KDM1A. At centromeres, specifically phosphorylated at Thr-12 (H3T11ph) from prophase to early anaphase, by DAPK3 and PKN1. Phosphorylation at Thr-12 (H3T11ph) by PKN1 or isoform M2 of PKM (PKM2) is a specific tag for epigenetic transcriptional activation that promotes demethylation of Lys-10 (H3K9me) by KDM4C/JMJD2C. Phosphorylation at Tyr-42 (H3Y41ph) by JAK2 promotes exclusion of CBX5 (HP1 alpha) from chromatin.</text>
</comment>
<comment type="PTM">
    <text evidence="1 22">Ubiquitinated by the CUL4-DDB-RBX1 complex in response to ultraviolet irradiation. This may weaken the interaction between histones and DNA and facilitate DNA accessibility to repair proteins (By similarity). Monoubiquitinated by RAG1 in lymphoid cells, monoubiquitination is required for V(D)J recombination.</text>
</comment>
<comment type="PTM">
    <text evidence="1">Lysine deamination at Lys-5 (H3K4all) to form allysine is mediated by LOXL2. Allysine formation by LOXL2 only takes place on H3K4me3 and results in gene repression (By similarity).</text>
</comment>
<comment type="PTM">
    <text evidence="23">Crotonylation (Kcr) is specifically present in male germ cells and marks testis-specific genes in post-meiotic cells, including X-linked genes that escape sex chromosome inactivation in haploid cells. Crotonylation marks active promoters and enhancers and confers resistance to transcriptional repressors. It is also associated with post-meiotically activated genes on autosomes.</text>
</comment>
<comment type="PTM">
    <text evidence="26">Butyrylation of histones marks active promoters and competes with histone acetylation. It is present during late spermatogenesis.</text>
</comment>
<comment type="PTM">
    <text evidence="27">Hydroxybutyrylation of histones is induced by starvation. It is linked to gene activation and may replace histone acetylation on the promoter of specific genes in response to fasting.</text>
</comment>
<comment type="PTM">
    <text evidence="5">Succinylation at Lys-80 (H3K79succ) by KAT2A takes place with a maximum frequency around the transcription start sites of genes. It gives a specific tag for epigenetic transcription activation. Desuccinylation at Lys-123 (H3K122succ) by SIRT7 in response to DNA damage promotes chromatin condensation and double-strand breaks (DSBs) repair.</text>
</comment>
<comment type="PTM">
    <text evidence="2">Serine ADP-ribosylation by PARP1 or PARP2 constitutes the primary form of ADP-ribosylation of proteins in response to DNA damage. Serine ADP-ribosylation at Ser-11 (H3S10ADPr) promotes recruitment of CHD1L. H3S10ADPr is mutually exclusive with phosphorylation at Ser-11 (H3S10ph) and impairs acetylation at Lys-10 (H3K9ac).</text>
</comment>
<comment type="PTM">
    <text evidence="29">Serotonylated by TGM2 at Gln-6 (H3Q5ser) during serotonergic neuron differentiation (PubMed:30867594). H3Q5ser is associated with trimethylation of Lys-5 (H3K4me3) and enhances general transcription factor IID (TFIID) complex-binding to H3K4me3, thereby facilitating transcription (PubMed:30867594).</text>
</comment>
<comment type="PTM">
    <text evidence="4 5">Dopaminylated by TGM2 at Gln-6 (H3Q5dop) in ventral tegmental area (VTA) neurons (By similarity). H3Q5dop mediates neurotransmission-independent role of nuclear dopamine by regulating relapse-related transcriptional plasticity in the reward system (By similarity).</text>
</comment>
<comment type="PTM">
    <text evidence="5">Lactylated in macrophages by EP300/P300 by using lactoyl-CoA directly derived from endogenous or exogenous lactate, leading to stimulates gene transcription.</text>
</comment>
<comment type="similarity">
    <text evidence="31">Belongs to the histone H3 family.</text>
</comment>
<comment type="sequence caution" evidence="31">
    <conflict type="erroneous initiation">
        <sequence resource="EMBL-CDS" id="AAH94041"/>
    </conflict>
</comment>
<comment type="sequence caution" evidence="31">
    <conflict type="erroneous initiation">
        <sequence resource="EMBL-CDS" id="AAO06264"/>
    </conflict>
</comment>
<organism>
    <name type="scientific">Mus musculus</name>
    <name type="common">Mouse</name>
    <dbReference type="NCBI Taxonomy" id="10090"/>
    <lineage>
        <taxon>Eukaryota</taxon>
        <taxon>Metazoa</taxon>
        <taxon>Chordata</taxon>
        <taxon>Craniata</taxon>
        <taxon>Vertebrata</taxon>
        <taxon>Euteleostomi</taxon>
        <taxon>Mammalia</taxon>
        <taxon>Eutheria</taxon>
        <taxon>Euarchontoglires</taxon>
        <taxon>Glires</taxon>
        <taxon>Rodentia</taxon>
        <taxon>Myomorpha</taxon>
        <taxon>Muroidea</taxon>
        <taxon>Muridae</taxon>
        <taxon>Murinae</taxon>
        <taxon>Mus</taxon>
        <taxon>Mus</taxon>
    </lineage>
</organism>
<keyword id="KW-0002">3D-structure</keyword>
<keyword id="KW-0007">Acetylation</keyword>
<keyword id="KW-0013">ADP-ribosylation</keyword>
<keyword id="KW-0158">Chromosome</keyword>
<keyword id="KW-0164">Citrullination</keyword>
<keyword id="KW-0238">DNA-binding</keyword>
<keyword id="KW-0379">Hydroxylation</keyword>
<keyword id="KW-0449">Lipoprotein</keyword>
<keyword id="KW-0488">Methylation</keyword>
<keyword id="KW-0544">Nucleosome core</keyword>
<keyword id="KW-0539">Nucleus</keyword>
<keyword id="KW-0564">Palmitate</keyword>
<keyword id="KW-0597">Phosphoprotein</keyword>
<keyword id="KW-1185">Reference proteome</keyword>
<keyword id="KW-0832">Ubl conjugation</keyword>
<sequence>MARTKQTARKSTGGKAPRKQLATKAARKSAPATGGVKKPHRYRPGTVALREIRRYQKSTELLIRKLPFQRLVREIAQDFKTDLRFQSSAVMALQEASEAYLVGLFEDTNLCAIHAKRVTIMPKDIQLARRIRGERA</sequence>
<accession>P84228</accession>
<accession>A3KMN6</accession>
<accession>P02295</accession>
<accession>P02297</accession>
<accession>P16105</accession>
<accession>P17269</accession>
<accession>P17320</accession>
<accession>Q60582</accession>
<accession>Q78E59</accession>
<accession>Q8CGN9</accession>
<name>H32_MOUSE</name>
<evidence type="ECO:0000250" key="1"/>
<evidence type="ECO:0000250" key="2">
    <source>
        <dbReference type="UniProtKB" id="P68431"/>
    </source>
</evidence>
<evidence type="ECO:0000250" key="3">
    <source>
        <dbReference type="UniProtKB" id="P84243"/>
    </source>
</evidence>
<evidence type="ECO:0000250" key="4">
    <source>
        <dbReference type="UniProtKB" id="P84245"/>
    </source>
</evidence>
<evidence type="ECO:0000250" key="5">
    <source>
        <dbReference type="UniProtKB" id="Q71DI3"/>
    </source>
</evidence>
<evidence type="ECO:0000256" key="6">
    <source>
        <dbReference type="SAM" id="MobiDB-lite"/>
    </source>
</evidence>
<evidence type="ECO:0000269" key="7">
    <source>
    </source>
</evidence>
<evidence type="ECO:0000269" key="8">
    <source>
    </source>
</evidence>
<evidence type="ECO:0000269" key="9">
    <source>
    </source>
</evidence>
<evidence type="ECO:0000269" key="10">
    <source>
    </source>
</evidence>
<evidence type="ECO:0000269" key="11">
    <source>
    </source>
</evidence>
<evidence type="ECO:0000269" key="12">
    <source>
    </source>
</evidence>
<evidence type="ECO:0000269" key="13">
    <source>
    </source>
</evidence>
<evidence type="ECO:0000269" key="14">
    <source>
    </source>
</evidence>
<evidence type="ECO:0000269" key="15">
    <source>
    </source>
</evidence>
<evidence type="ECO:0000269" key="16">
    <source>
    </source>
</evidence>
<evidence type="ECO:0000269" key="17">
    <source>
    </source>
</evidence>
<evidence type="ECO:0000269" key="18">
    <source>
    </source>
</evidence>
<evidence type="ECO:0000269" key="19">
    <source>
    </source>
</evidence>
<evidence type="ECO:0000269" key="20">
    <source>
    </source>
</evidence>
<evidence type="ECO:0000269" key="21">
    <source>
    </source>
</evidence>
<evidence type="ECO:0000269" key="22">
    <source>
    </source>
</evidence>
<evidence type="ECO:0000269" key="23">
    <source>
    </source>
</evidence>
<evidence type="ECO:0000269" key="24">
    <source>
    </source>
</evidence>
<evidence type="ECO:0000269" key="25">
    <source>
    </source>
</evidence>
<evidence type="ECO:0000269" key="26">
    <source>
    </source>
</evidence>
<evidence type="ECO:0000269" key="27">
    <source>
    </source>
</evidence>
<evidence type="ECO:0000269" key="28">
    <source>
    </source>
</evidence>
<evidence type="ECO:0000269" key="29">
    <source>
    </source>
</evidence>
<evidence type="ECO:0000269" key="30">
    <source>
    </source>
</evidence>
<evidence type="ECO:0000305" key="31"/>
<evidence type="ECO:0000305" key="32">
    <source>
    </source>
</evidence>
<evidence type="ECO:0000312" key="33">
    <source>
        <dbReference type="MGI" id="MGI:2448319"/>
    </source>
</evidence>
<evidence type="ECO:0000312" key="34">
    <source>
        <dbReference type="MGI" id="MGI:2448320"/>
    </source>
</evidence>
<evidence type="ECO:0000312" key="35">
    <source>
        <dbReference type="MGI" id="MGI:2448322"/>
    </source>
</evidence>
<evidence type="ECO:0000312" key="36">
    <source>
        <dbReference type="MGI" id="MGI:2448326"/>
    </source>
</evidence>
<evidence type="ECO:0000312" key="37">
    <source>
        <dbReference type="MGI" id="MGI:2448329"/>
    </source>
</evidence>
<evidence type="ECO:0000312" key="38">
    <source>
        <dbReference type="MGI" id="MGI:2448351"/>
    </source>
</evidence>
<evidence type="ECO:0000312" key="39">
    <source>
        <dbReference type="MGI" id="MGI:2448355"/>
    </source>
</evidence>
<evidence type="ECO:0000312" key="40">
    <source>
        <dbReference type="MGI" id="MGI:2448357"/>
    </source>
</evidence>
<evidence type="ECO:0007829" key="41">
    <source>
        <dbReference type="PDB" id="2V87"/>
    </source>
</evidence>
<reference key="1">
    <citation type="journal article" date="1983" name="Nucleic Acids Res.">
        <title>Structure of a cluster of mouse histone genes.</title>
        <authorList>
            <person name="Sittman D.B."/>
            <person name="Graves R.A."/>
            <person name="Marzluff W.F."/>
        </authorList>
    </citation>
    <scope>NUCLEOTIDE SEQUENCE [GENOMIC DNA] (H3C2)</scope>
</reference>
<reference key="2">
    <citation type="journal article" date="1986" name="J. Mol. Evol.">
        <title>Sequences of four mouse histone H3 genes: implications for evolution of mouse histone genes.</title>
        <authorList>
            <person name="Taylor J.D."/>
            <person name="Wellman S.E."/>
            <person name="Marzluff W.F."/>
        </authorList>
    </citation>
    <scope>NUCLEOTIDE SEQUENCE [GENOMIC DNA] (H3C15 AND H3C7)</scope>
</reference>
<reference key="3">
    <citation type="journal article" date="1989" name="Nucleic Acids Res.">
        <title>The mouse histone H2a.2 gene from chromosome 3.</title>
        <authorList>
            <person name="Hurt M.M."/>
            <person name="Chodchoy N."/>
            <person name="Marzluff W.F."/>
        </authorList>
    </citation>
    <scope>NUCLEOTIDE SEQUENCE [GENOMIC DNA]</scope>
    <source>
        <strain>BALB/cJ</strain>
        <tissue>Liver</tissue>
    </source>
</reference>
<reference key="4">
    <citation type="journal article" date="1990" name="Gene">
        <title>Structure of a mouse histone-encoding gene cluster.</title>
        <authorList>
            <person name="Gruber A."/>
            <person name="Streit A."/>
            <person name="Reist M."/>
            <person name="Benninger P."/>
            <person name="Boehni R."/>
            <person name="Schuemperli D."/>
        </authorList>
    </citation>
    <scope>NUCLEOTIDE SEQUENCE [GENOMIC DNA] (H3C2)</scope>
    <source>
        <strain>BALB/cJ</strain>
    </source>
</reference>
<reference key="5">
    <citation type="journal article" date="1994" name="Genetics">
        <title>Selection on silent sites in the rodent histone H3 gene family.</title>
        <authorList>
            <person name="DeBry R.W."/>
            <person name="Marzluff W.F."/>
        </authorList>
    </citation>
    <scope>NUCLEOTIDE SEQUENCE [GENOMIC DNA] (H3C3)</scope>
</reference>
<reference key="6">
    <citation type="journal article" date="1996" name="Genome Res.">
        <title>Characterization of the mouse histone gene cluster on chromosome 13: 45 histone genes in three patches spread over 1Mb.</title>
        <authorList>
            <person name="Wang Z.-F."/>
            <person name="Krasikov T."/>
            <person name="Frey M.R."/>
            <person name="Wang J."/>
            <person name="Matera A.G."/>
            <person name="Marzluff W.F."/>
        </authorList>
    </citation>
    <scope>NUCLEOTIDE SEQUENCE [GENOMIC DNA] (H3C3)</scope>
    <source>
        <strain>C57BL/6J</strain>
    </source>
</reference>
<reference key="7">
    <citation type="journal article" date="1996" name="Genome Res.">
        <title>Characterization of the 55-kb mouse histone gene cluster on chromosome 3.</title>
        <authorList>
            <person name="Wang Z.-F."/>
            <person name="Tisovec R."/>
            <person name="Debry R.W."/>
            <person name="Frey M.R."/>
            <person name="Matera A.G."/>
            <person name="Marzluff W.F."/>
        </authorList>
    </citation>
    <scope>NUCLEOTIDE SEQUENCE [GENOMIC DNA] (H3C4; H3C6; H3C13 AND HIST2H3CA1)</scope>
</reference>
<reference key="8">
    <citation type="journal article" date="2002" name="Genomics">
        <title>The human and mouse replication-dependent histone genes.</title>
        <authorList>
            <person name="Marzluff W.F."/>
            <person name="Gongidi P."/>
            <person name="Woods K.R."/>
            <person name="Jin J."/>
            <person name="Maltais L.J."/>
        </authorList>
    </citation>
    <scope>NUCLEOTIDE SEQUENCE [GENOMIC DNA] (H3C2; H3C3; H3C4; H3C6; H3C7; H3C13; H3C14 AND H3C15)</scope>
</reference>
<reference key="9">
    <citation type="journal article" date="2005" name="Science">
        <title>The transcriptional landscape of the mammalian genome.</title>
        <authorList>
            <person name="Carninci P."/>
            <person name="Kasukawa T."/>
            <person name="Katayama S."/>
            <person name="Gough J."/>
            <person name="Frith M.C."/>
            <person name="Maeda N."/>
            <person name="Oyama R."/>
            <person name="Ravasi T."/>
            <person name="Lenhard B."/>
            <person name="Wells C."/>
            <person name="Kodzius R."/>
            <person name="Shimokawa K."/>
            <person name="Bajic V.B."/>
            <person name="Brenner S.E."/>
            <person name="Batalov S."/>
            <person name="Forrest A.R."/>
            <person name="Zavolan M."/>
            <person name="Davis M.J."/>
            <person name="Wilming L.G."/>
            <person name="Aidinis V."/>
            <person name="Allen J.E."/>
            <person name="Ambesi-Impiombato A."/>
            <person name="Apweiler R."/>
            <person name="Aturaliya R.N."/>
            <person name="Bailey T.L."/>
            <person name="Bansal M."/>
            <person name="Baxter L."/>
            <person name="Beisel K.W."/>
            <person name="Bersano T."/>
            <person name="Bono H."/>
            <person name="Chalk A.M."/>
            <person name="Chiu K.P."/>
            <person name="Choudhary V."/>
            <person name="Christoffels A."/>
            <person name="Clutterbuck D.R."/>
            <person name="Crowe M.L."/>
            <person name="Dalla E."/>
            <person name="Dalrymple B.P."/>
            <person name="de Bono B."/>
            <person name="Della Gatta G."/>
            <person name="di Bernardo D."/>
            <person name="Down T."/>
            <person name="Engstrom P."/>
            <person name="Fagiolini M."/>
            <person name="Faulkner G."/>
            <person name="Fletcher C.F."/>
            <person name="Fukushima T."/>
            <person name="Furuno M."/>
            <person name="Futaki S."/>
            <person name="Gariboldi M."/>
            <person name="Georgii-Hemming P."/>
            <person name="Gingeras T.R."/>
            <person name="Gojobori T."/>
            <person name="Green R.E."/>
            <person name="Gustincich S."/>
            <person name="Harbers M."/>
            <person name="Hayashi Y."/>
            <person name="Hensch T.K."/>
            <person name="Hirokawa N."/>
            <person name="Hill D."/>
            <person name="Huminiecki L."/>
            <person name="Iacono M."/>
            <person name="Ikeo K."/>
            <person name="Iwama A."/>
            <person name="Ishikawa T."/>
            <person name="Jakt M."/>
            <person name="Kanapin A."/>
            <person name="Katoh M."/>
            <person name="Kawasawa Y."/>
            <person name="Kelso J."/>
            <person name="Kitamura H."/>
            <person name="Kitano H."/>
            <person name="Kollias G."/>
            <person name="Krishnan S.P."/>
            <person name="Kruger A."/>
            <person name="Kummerfeld S.K."/>
            <person name="Kurochkin I.V."/>
            <person name="Lareau L.F."/>
            <person name="Lazarevic D."/>
            <person name="Lipovich L."/>
            <person name="Liu J."/>
            <person name="Liuni S."/>
            <person name="McWilliam S."/>
            <person name="Madan Babu M."/>
            <person name="Madera M."/>
            <person name="Marchionni L."/>
            <person name="Matsuda H."/>
            <person name="Matsuzawa S."/>
            <person name="Miki H."/>
            <person name="Mignone F."/>
            <person name="Miyake S."/>
            <person name="Morris K."/>
            <person name="Mottagui-Tabar S."/>
            <person name="Mulder N."/>
            <person name="Nakano N."/>
            <person name="Nakauchi H."/>
            <person name="Ng P."/>
            <person name="Nilsson R."/>
            <person name="Nishiguchi S."/>
            <person name="Nishikawa S."/>
            <person name="Nori F."/>
            <person name="Ohara O."/>
            <person name="Okazaki Y."/>
            <person name="Orlando V."/>
            <person name="Pang K.C."/>
            <person name="Pavan W.J."/>
            <person name="Pavesi G."/>
            <person name="Pesole G."/>
            <person name="Petrovsky N."/>
            <person name="Piazza S."/>
            <person name="Reed J."/>
            <person name="Reid J.F."/>
            <person name="Ring B.Z."/>
            <person name="Ringwald M."/>
            <person name="Rost B."/>
            <person name="Ruan Y."/>
            <person name="Salzberg S.L."/>
            <person name="Sandelin A."/>
            <person name="Schneider C."/>
            <person name="Schoenbach C."/>
            <person name="Sekiguchi K."/>
            <person name="Semple C.A."/>
            <person name="Seno S."/>
            <person name="Sessa L."/>
            <person name="Sheng Y."/>
            <person name="Shibata Y."/>
            <person name="Shimada H."/>
            <person name="Shimada K."/>
            <person name="Silva D."/>
            <person name="Sinclair B."/>
            <person name="Sperling S."/>
            <person name="Stupka E."/>
            <person name="Sugiura K."/>
            <person name="Sultana R."/>
            <person name="Takenaka Y."/>
            <person name="Taki K."/>
            <person name="Tammoja K."/>
            <person name="Tan S.L."/>
            <person name="Tang S."/>
            <person name="Taylor M.S."/>
            <person name="Tegner J."/>
            <person name="Teichmann S.A."/>
            <person name="Ueda H.R."/>
            <person name="van Nimwegen E."/>
            <person name="Verardo R."/>
            <person name="Wei C.L."/>
            <person name="Yagi K."/>
            <person name="Yamanishi H."/>
            <person name="Zabarovsky E."/>
            <person name="Zhu S."/>
            <person name="Zimmer A."/>
            <person name="Hide W."/>
            <person name="Bult C."/>
            <person name="Grimmond S.M."/>
            <person name="Teasdale R.D."/>
            <person name="Liu E.T."/>
            <person name="Brusic V."/>
            <person name="Quackenbush J."/>
            <person name="Wahlestedt C."/>
            <person name="Mattick J.S."/>
            <person name="Hume D.A."/>
            <person name="Kai C."/>
            <person name="Sasaki D."/>
            <person name="Tomaru Y."/>
            <person name="Fukuda S."/>
            <person name="Kanamori-Katayama M."/>
            <person name="Suzuki M."/>
            <person name="Aoki J."/>
            <person name="Arakawa T."/>
            <person name="Iida J."/>
            <person name="Imamura K."/>
            <person name="Itoh M."/>
            <person name="Kato T."/>
            <person name="Kawaji H."/>
            <person name="Kawagashira N."/>
            <person name="Kawashima T."/>
            <person name="Kojima M."/>
            <person name="Kondo S."/>
            <person name="Konno H."/>
            <person name="Nakano K."/>
            <person name="Ninomiya N."/>
            <person name="Nishio T."/>
            <person name="Okada M."/>
            <person name="Plessy C."/>
            <person name="Shibata K."/>
            <person name="Shiraki T."/>
            <person name="Suzuki S."/>
            <person name="Tagami M."/>
            <person name="Waki K."/>
            <person name="Watahiki A."/>
            <person name="Okamura-Oho Y."/>
            <person name="Suzuki H."/>
            <person name="Kawai J."/>
            <person name="Hayashizaki Y."/>
        </authorList>
    </citation>
    <scope>NUCLEOTIDE SEQUENCE [LARGE SCALE MRNA]</scope>
    <source>
        <strain>C57BL/6J</strain>
        <tissue>Embryo</tissue>
    </source>
</reference>
<reference key="10">
    <citation type="journal article" date="2009" name="PLoS Biol.">
        <title>Lineage-specific biology revealed by a finished genome assembly of the mouse.</title>
        <authorList>
            <person name="Church D.M."/>
            <person name="Goodstadt L."/>
            <person name="Hillier L.W."/>
            <person name="Zody M.C."/>
            <person name="Goldstein S."/>
            <person name="She X."/>
            <person name="Bult C.J."/>
            <person name="Agarwala R."/>
            <person name="Cherry J.L."/>
            <person name="DiCuccio M."/>
            <person name="Hlavina W."/>
            <person name="Kapustin Y."/>
            <person name="Meric P."/>
            <person name="Maglott D."/>
            <person name="Birtle Z."/>
            <person name="Marques A.C."/>
            <person name="Graves T."/>
            <person name="Zhou S."/>
            <person name="Teague B."/>
            <person name="Potamousis K."/>
            <person name="Churas C."/>
            <person name="Place M."/>
            <person name="Herschleb J."/>
            <person name="Runnheim R."/>
            <person name="Forrest D."/>
            <person name="Amos-Landgraf J."/>
            <person name="Schwartz D.C."/>
            <person name="Cheng Z."/>
            <person name="Lindblad-Toh K."/>
            <person name="Eichler E.E."/>
            <person name="Ponting C.P."/>
        </authorList>
    </citation>
    <scope>NUCLEOTIDE SEQUENCE [LARGE SCALE GENOMIC DNA]</scope>
    <source>
        <strain>C57BL/6J</strain>
    </source>
</reference>
<reference key="11">
    <citation type="journal article" date="2004" name="Genome Res.">
        <title>The status, quality, and expansion of the NIH full-length cDNA project: the Mammalian Gene Collection (MGC).</title>
        <authorList>
            <consortium name="The MGC Project Team"/>
        </authorList>
    </citation>
    <scope>NUCLEOTIDE SEQUENCE [LARGE SCALE MRNA] (H3C15)</scope>
    <source>
        <strain>FVB/N</strain>
        <tissue>Kidney</tissue>
    </source>
</reference>
<reference key="12">
    <citation type="journal article" date="1994" name="Nucleic Acids Res.">
        <title>An alternative pathway of histone mRNA 3' end formation in mouse round spermatids.</title>
        <authorList>
            <person name="Moss S.B."/>
            <person name="Ferry R.A."/>
            <person name="Groudine M."/>
        </authorList>
    </citation>
    <scope>NUCLEOTIDE SEQUENCE [MRNA] OF 79-136</scope>
    <source>
        <strain>CD-1</strain>
        <tissue>Testis</tissue>
    </source>
</reference>
<reference key="13">
    <citation type="journal article" date="1999" name="J. Biol. Chem.">
        <title>Identification of a novel phosphorylation site on histone H3 coupled with mitotic chromosome condensation.</title>
        <authorList>
            <person name="Goto H."/>
            <person name="Tomono Y."/>
            <person name="Ajiro K."/>
            <person name="Kosako H."/>
            <person name="Fujita M."/>
            <person name="Sakurai M."/>
            <person name="Okawa K."/>
            <person name="Iwamatsu A."/>
            <person name="Okigaki T."/>
            <person name="Takahashi T."/>
            <person name="Inagaki M."/>
        </authorList>
    </citation>
    <scope>PHOSPHORYLATION AT SER-11 AND SER-29</scope>
</reference>
<reference key="14">
    <citation type="journal article" date="2001" name="J. Biol. Chem.">
        <title>Ultraviolet B-induced phosphorylation of histone H3 at serine 28 is mediated by MSK1.</title>
        <authorList>
            <person name="Zhong S."/>
            <person name="Jansen C."/>
            <person name="She Q.-B."/>
            <person name="Goto H."/>
            <person name="Inagaki M."/>
            <person name="Bode A.M."/>
            <person name="Ma W.-Y."/>
            <person name="Dong Z."/>
        </authorList>
    </citation>
    <scope>PHOSPHORYLATION AT SER-29</scope>
</reference>
<reference key="15">
    <citation type="journal article" date="2002" name="Curr. Biol.">
        <title>Crosstalk between CARM1 methylation and CBP acetylation on histone H3.</title>
        <authorList>
            <person name="Daujat S."/>
            <person name="Bauer U.-M."/>
            <person name="Shah V."/>
            <person name="Turner B."/>
            <person name="Berger S."/>
            <person name="Kouzarides T."/>
        </authorList>
    </citation>
    <scope>ACETYLATION AT LYS-15; LYS-19 AND LYS-24</scope>
    <scope>METHYLATION AT ARG-18</scope>
</reference>
<reference key="16">
    <citation type="journal article" date="2002" name="EMBO Rep.">
        <title>Methylation at arginine 17 of histone H3 is linked to gene activation.</title>
        <authorList>
            <person name="Bauer U.-M."/>
            <person name="Daujat S."/>
            <person name="Nielsen S.J."/>
            <person name="Nightingale K."/>
            <person name="Kouzarides T."/>
        </authorList>
    </citation>
    <scope>METHYLATION AT ARG-18</scope>
</reference>
<reference key="17">
    <citation type="journal article" date="2002" name="Genes Cells">
        <title>Aurora-B phosphorylates Histone H3 at serine28 with regard to the mitotic chromosome condensation.</title>
        <authorList>
            <person name="Goto H."/>
            <person name="Yasui Y."/>
            <person name="Nigg E.A."/>
            <person name="Inagaki M."/>
        </authorList>
    </citation>
    <scope>PHOSPHORYLATION AT SER-11 AND SER-29</scope>
</reference>
<reference key="18">
    <citation type="journal article" date="2003" name="J. Protein Chem.">
        <title>Identification of methylation and acetylation sites on mouse histone H3 using matrix-assisted laser desorption/ionization time-of-flight and nanoelectrospray ionization tandem mass spectrometry.</title>
        <authorList>
            <person name="Cocklin R.R."/>
            <person name="Wang M."/>
        </authorList>
    </citation>
    <scope>ACETYLATION AT LYS-15; LYS-19 AND LYS-24</scope>
    <scope>METHYLATION AT LYS-10; LYS-28; LYS-37; LYS-80 AND LYS-123</scope>
    <scope>IDENTIFICATION BY MASS SPECTROMETRY</scope>
</reference>
<reference key="19">
    <citation type="journal article" date="2004" name="Cell">
        <title>Histone deimination antagonizes arginine methylation.</title>
        <authorList>
            <person name="Cuthbert G.L."/>
            <person name="Daujat S."/>
            <person name="Snowden A.W."/>
            <person name="Erdjument-Bromage H."/>
            <person name="Hagiwara T."/>
            <person name="Yamada M."/>
            <person name="Schneider R."/>
            <person name="Gregory P.D."/>
            <person name="Tempst P."/>
            <person name="Bannister A.J."/>
            <person name="Kouzarides T."/>
        </authorList>
    </citation>
    <scope>CITRULLINATION AT ARG-3; ARG-9; ARG-18 AND ARG-27</scope>
</reference>
<reference key="20">
    <citation type="journal article" date="2004" name="Mol. Cell. Biol.">
        <title>Human SWI/SNF-associated PRMT5 methylates histone H3 arginine 8 and negatively regulates expression of ST7 and NM23 tumor suppressor genes.</title>
        <authorList>
            <person name="Pal S."/>
            <person name="Vishwanath S.N."/>
            <person name="Erdjument-Bromage H."/>
            <person name="Tempst P."/>
            <person name="Sif S."/>
        </authorList>
    </citation>
    <scope>METHYLATION AT ARG-9</scope>
    <scope>ACETYLATION AT LYS-10</scope>
</reference>
<reference key="21">
    <citation type="journal article" date="2005" name="EMBO J.">
        <title>Arginine methyltransferase CARM1 is a promoter-specific regulator of NF-kappaB-dependent gene expression.</title>
        <authorList>
            <person name="Covic M."/>
            <person name="Hassa P.O."/>
            <person name="Saccani S."/>
            <person name="Buerki C."/>
            <person name="Meier N.I."/>
            <person name="Lombardi C."/>
            <person name="Imhof R."/>
            <person name="Bedford M.T."/>
            <person name="Natoli G."/>
            <person name="Hottiger M.O."/>
        </authorList>
    </citation>
    <scope>METHYLATION AT ARG-18</scope>
</reference>
<reference key="22">
    <citation type="journal article" date="2005" name="Genes Dev.">
        <title>The kinase haspin is required for mitotic histone H3 Thr 3 phosphorylation and normal metaphase chromosome alignment.</title>
        <authorList>
            <person name="Dai J."/>
            <person name="Sultan S."/>
            <person name="Taylor S.S."/>
            <person name="Higgins J.M.G."/>
        </authorList>
    </citation>
    <scope>PHOSPHORYLATION AT THR-4 AND SER-11</scope>
</reference>
<reference key="23">
    <citation type="journal article" date="2005" name="J. Biol. Chem.">
        <title>Phosphorylation of Ser28 in histone H3 mediated by mixed lineage kinase-like mitogen-activated protein triple kinase alpha.</title>
        <authorList>
            <person name="Choi H.S."/>
            <person name="Choi B.Y."/>
            <person name="Cho Y.-Y."/>
            <person name="Zhu F."/>
            <person name="Bode A.M."/>
            <person name="Dong Z."/>
        </authorList>
    </citation>
    <scope>PHOSPHORYLATION AT SER-29</scope>
</reference>
<reference key="24">
    <citation type="journal article" date="2005" name="J. Cell Sci.">
        <title>MAP kinase-mediated phosphorylation of distinct pools of histone H3 at S10 or S28 via mitogen- and stress-activated kinase 1/2.</title>
        <authorList>
            <person name="Dyson M.H."/>
            <person name="Thomson S."/>
            <person name="Inagaki M."/>
            <person name="Goto H."/>
            <person name="Arthur S.J."/>
            <person name="Nightingale K."/>
            <person name="Iborra F.J."/>
            <person name="Mahadevan L.C."/>
        </authorList>
    </citation>
    <scope>PHOSPHORYLATION AT SER-11 AND SER-29</scope>
</reference>
<reference key="25">
    <citation type="journal article" date="2005" name="Oncogene">
        <title>Stimulation of the Ras-MAPK pathway leads to independent phosphorylation of histone H3 on serine 10 and 28.</title>
        <authorList>
            <person name="Dunn K.L."/>
            <person name="Davie J.R."/>
        </authorList>
    </citation>
    <scope>PHOSPHORYLATION AT SER-11 AND SER-29</scope>
</reference>
<reference key="26">
    <citation type="journal article" date="2007" name="J. Biol. Chem.">
        <title>Identification of histone H3 lysine 36 acetylation as a highly conserved histone modification.</title>
        <authorList>
            <person name="Morris S.A."/>
            <person name="Rao B."/>
            <person name="Garcia B.A."/>
            <person name="Hake S.B."/>
            <person name="Diaz R.L."/>
            <person name="Shabanowitz J."/>
            <person name="Hunt D.F."/>
            <person name="Allis C.D."/>
            <person name="Lieb J.D."/>
            <person name="Strahl B.D."/>
        </authorList>
    </citation>
    <scope>ACETYLATION AT LYS-37</scope>
</reference>
<reference key="27">
    <citation type="journal article" date="2007" name="J. Biol. Chem.">
        <title>Organismal differences in post-translational modifications in histones H3 and H4.</title>
        <authorList>
            <person name="Garcia B.A."/>
            <person name="Hake S.B."/>
            <person name="Diaz R.L."/>
            <person name="Kauer M."/>
            <person name="Morris S.A."/>
            <person name="Recht J."/>
            <person name="Shabanowitz J."/>
            <person name="Mishra N."/>
            <person name="Strahl B.D."/>
            <person name="Allis C.D."/>
            <person name="Hunt D.F."/>
        </authorList>
    </citation>
    <scope>ACETYLATION AT LYS-5; LYS-10; LYS-15; LYS-19; LYS-24 AND LYS-28</scope>
    <scope>METHYLATION AT LYS-5; LYS-10; LYS-19; LYS-24; LYS-28; LYS-37 AND LYS-80</scope>
    <scope>IDENTIFICATION BY MASS SPECTROMETRY</scope>
</reference>
<reference key="28">
    <citation type="journal article" date="2010" name="Mol. Cell">
        <title>The RING domain of RAG1 ubiquitylates histone H3: a novel activity in chromatin-mediated regulation of V(D)J joining.</title>
        <authorList>
            <person name="Grazini U."/>
            <person name="Zanardi F."/>
            <person name="Citterio E."/>
            <person name="Casola S."/>
            <person name="Goding C.R."/>
            <person name="McBlane F."/>
        </authorList>
    </citation>
    <scope>UBIQUITINATION</scope>
</reference>
<reference key="29">
    <citation type="journal article" date="2011" name="Cell">
        <title>Identification of 67 histone marks and histone lysine crotonylation as a new type of histone modification.</title>
        <authorList>
            <person name="Tan M."/>
            <person name="Luo H."/>
            <person name="Lee S."/>
            <person name="Jin F."/>
            <person name="Yang J.S."/>
            <person name="Montellier E."/>
            <person name="Buchou T."/>
            <person name="Cheng Z."/>
            <person name="Rousseaux S."/>
            <person name="Rajagopal N."/>
            <person name="Lu Z."/>
            <person name="Ye Z."/>
            <person name="Zhu Q."/>
            <person name="Wysocka J."/>
            <person name="Ye Y."/>
            <person name="Khochbin S."/>
            <person name="Ren B."/>
            <person name="Zhao Y."/>
        </authorList>
    </citation>
    <scope>CROTONYLATION AT LYS-5; LYS-10; LYS-19; LYS-24; LYS-28 AND LYS-57</scope>
</reference>
<reference key="30">
    <citation type="journal article" date="2012" name="Mol. Cell. Proteomics">
        <title>Lysine succinylation and lysine malonylation in histones.</title>
        <authorList>
            <person name="Xie Z."/>
            <person name="Dai J."/>
            <person name="Dai L."/>
            <person name="Tan M."/>
            <person name="Cheng Z."/>
            <person name="Wu Y."/>
            <person name="Boeke J.D."/>
            <person name="Zhao Y."/>
        </authorList>
    </citation>
    <scope>SUCCINYLATION AT LYS-57 AND LYS-80</scope>
</reference>
<reference key="31">
    <citation type="journal article" date="2014" name="Nat. Chem. Biol.">
        <title>Lysine 2-hydroxyisobutyrylation is a widely distributed active histone mark.</title>
        <authorList>
            <person name="Dai L."/>
            <person name="Peng C."/>
            <person name="Montellier E."/>
            <person name="Lu Z."/>
            <person name="Chen Y."/>
            <person name="Ishii H."/>
            <person name="Debernardi A."/>
            <person name="Buchou T."/>
            <person name="Rousseaux S."/>
            <person name="Jin F."/>
            <person name="Sabari B.R."/>
            <person name="Deng Z."/>
            <person name="Allis C.D."/>
            <person name="Ren B."/>
            <person name="Khochbin S."/>
            <person name="Zhao Y."/>
        </authorList>
    </citation>
    <scope>HYDROXYBUTYRYLATION AT LYS-5; LYS-10; LYS-15; LYS-19; LYS-24; LYS-28; LYS-37; LYS-57; LYS-65; LYS-80 AND LYS-123</scope>
</reference>
<reference key="32">
    <citation type="journal article" date="2016" name="Mol. Cell">
        <title>Dynamic competing histone H4 K5K8 acetylation and butyrylation are hallmarks of highly active gene promoters.</title>
        <authorList>
            <person name="Goudarzi A."/>
            <person name="Zhang D."/>
            <person name="Huang H."/>
            <person name="Barral S."/>
            <person name="Kwon O.K."/>
            <person name="Qi S."/>
            <person name="Tang Z."/>
            <person name="Buchou T."/>
            <person name="Vitte A.L."/>
            <person name="He T."/>
            <person name="Cheng Z."/>
            <person name="Montellier E."/>
            <person name="Gaucher J."/>
            <person name="Curtet S."/>
            <person name="Debernardi A."/>
            <person name="Charbonnier G."/>
            <person name="Puthier D."/>
            <person name="Petosa C."/>
            <person name="Panne D."/>
            <person name="Rousseaux S."/>
            <person name="Roeder R.G."/>
            <person name="Zhao Y."/>
            <person name="Khochbin S."/>
        </authorList>
    </citation>
    <scope>BUTYRYLATION AT LYS-19; LYS-24; LYS-28; LYS-37; LYS-38; LYS-80 AND LYS-123</scope>
</reference>
<reference key="33">
    <citation type="journal article" date="2016" name="Mol. Cell">
        <title>Metabolic regulation of gene expression by histone lysine beta-hydroxybutyrylation.</title>
        <authorList>
            <person name="Xie Z."/>
            <person name="Zhang D."/>
            <person name="Chung D."/>
            <person name="Tang Z."/>
            <person name="Huang H."/>
            <person name="Dai L."/>
            <person name="Qi S."/>
            <person name="Li J."/>
            <person name="Colak G."/>
            <person name="Chen Y."/>
            <person name="Xia C."/>
            <person name="Peng C."/>
            <person name="Ruan H."/>
            <person name="Kirkey M."/>
            <person name="Wang D."/>
            <person name="Jensen L.M."/>
            <person name="Kwon O.K."/>
            <person name="Lee S."/>
            <person name="Pletcher S.D."/>
            <person name="Tan M."/>
            <person name="Lombard D.B."/>
            <person name="White K.P."/>
            <person name="Zhao H."/>
            <person name="Li J."/>
            <person name="Roeder R.G."/>
            <person name="Yang X."/>
            <person name="Zhao Y."/>
        </authorList>
    </citation>
    <scope>HYDROXYBUTYRYLATION AT LYS-5; LYS-10; LYS-15; LYS-19; LYS-24 AND LYS-57</scope>
</reference>
<reference key="34">
    <citation type="journal article" date="2018" name="Sci. Rep.">
        <title>Histone deacetylase (HDAC) 1 and 2 complexes regulate both histone acetylation and crotonylation in vivo.</title>
        <authorList>
            <person name="Kelly R.D.W."/>
            <person name="Chandru A."/>
            <person name="Watson P.J."/>
            <person name="Song Y."/>
            <person name="Blades M."/>
            <person name="Robertson N.S."/>
            <person name="Jamieson A.G."/>
            <person name="Schwabe J.W.R."/>
            <person name="Cowley S.M."/>
        </authorList>
    </citation>
    <scope>CROTONYLATION AT LYS-19</scope>
    <scope>ACETYLATION AT LYS-19</scope>
</reference>
<reference key="35">
    <citation type="journal article" date="2019" name="Nature">
        <title>Histone serotonylation is a permissive modification that enhances TFIID binding to H3K4me3.</title>
        <authorList>
            <person name="Farrelly L.A."/>
            <person name="Thompson R.E."/>
            <person name="Zhao S."/>
            <person name="Lepack A.E."/>
            <person name="Lyu Y."/>
            <person name="Bhanu N.V."/>
            <person name="Zhang B."/>
            <person name="Loh Y.E."/>
            <person name="Ramakrishnan A."/>
            <person name="Vadodaria K.C."/>
            <person name="Heard K.J."/>
            <person name="Erikson G."/>
            <person name="Nakadai T."/>
            <person name="Bastle R.M."/>
            <person name="Lukasak B.J."/>
            <person name="Zebroski H. III"/>
            <person name="Alenina N."/>
            <person name="Bader M."/>
            <person name="Berton O."/>
            <person name="Roeder R.G."/>
            <person name="Molina H."/>
            <person name="Gage F.H."/>
            <person name="Shen L."/>
            <person name="Garcia B.A."/>
            <person name="Li H."/>
            <person name="Muir T.W."/>
            <person name="Maze I."/>
        </authorList>
    </citation>
    <scope>SEROTONYLATION AT GLN-6</scope>
</reference>
<reference key="36">
    <citation type="journal article" date="2019" name="Nature">
        <title>Metabolic regulation of gene expression by histone lactylation.</title>
        <authorList>
            <person name="Zhang D."/>
            <person name="Tang Z."/>
            <person name="Huang H."/>
            <person name="Zhou G."/>
            <person name="Cui C."/>
            <person name="Weng Y."/>
            <person name="Liu W."/>
            <person name="Kim S."/>
            <person name="Lee S."/>
            <person name="Perez-Neut M."/>
            <person name="Ding J."/>
            <person name="Czyz D."/>
            <person name="Hu R."/>
            <person name="Ye Z."/>
            <person name="He M."/>
            <person name="Zheng Y.G."/>
            <person name="Shuman H.A."/>
            <person name="Dai L."/>
            <person name="Ren B."/>
            <person name="Roeder R.G."/>
            <person name="Becker L."/>
            <person name="Zhao Y."/>
        </authorList>
    </citation>
    <scope>LACTYLATION AT LYS-15; LYS-19; LYS-24; LYS-28 AND LYS-57</scope>
</reference>
<dbReference type="EMBL" id="X01685">
    <property type="protein sequence ID" value="CAA25840.1"/>
    <property type="molecule type" value="Genomic_DNA"/>
</dbReference>
<dbReference type="EMBL" id="M32459">
    <property type="protein sequence ID" value="AAA37810.1"/>
    <property type="molecule type" value="Genomic_DNA"/>
</dbReference>
<dbReference type="EMBL" id="M32461">
    <property type="protein sequence ID" value="AAA37812.1"/>
    <property type="molecule type" value="Genomic_DNA"/>
</dbReference>
<dbReference type="EMBL" id="X16148">
    <property type="protein sequence ID" value="CAA34274.1"/>
    <property type="molecule type" value="Genomic_DNA"/>
</dbReference>
<dbReference type="EMBL" id="M33989">
    <property type="protein sequence ID" value="AAA37764.1"/>
    <property type="molecule type" value="Genomic_DNA"/>
</dbReference>
<dbReference type="EMBL" id="X80328">
    <property type="protein sequence ID" value="CAA56577.1"/>
    <property type="molecule type" value="Genomic_DNA"/>
</dbReference>
<dbReference type="EMBL" id="U62669">
    <property type="protein sequence ID" value="AAB04760.1"/>
    <property type="molecule type" value="Genomic_DNA"/>
</dbReference>
<dbReference type="EMBL" id="U62671">
    <property type="protein sequence ID" value="AAB04764.1"/>
    <property type="molecule type" value="Genomic_DNA"/>
</dbReference>
<dbReference type="EMBL" id="U62674">
    <property type="protein sequence ID" value="AAB04771.1"/>
    <property type="molecule type" value="Genomic_DNA"/>
</dbReference>
<dbReference type="EMBL" id="U62675">
    <property type="protein sequence ID" value="AAB04772.1"/>
    <property type="molecule type" value="Genomic_DNA"/>
</dbReference>
<dbReference type="EMBL" id="AY158941">
    <property type="protein sequence ID" value="AAO06251.1"/>
    <property type="molecule type" value="Genomic_DNA"/>
</dbReference>
<dbReference type="EMBL" id="AY158947">
    <property type="protein sequence ID" value="AAO06257.1"/>
    <property type="molecule type" value="Genomic_DNA"/>
</dbReference>
<dbReference type="EMBL" id="AY158948">
    <property type="protein sequence ID" value="AAO06258.1"/>
    <property type="molecule type" value="Genomic_DNA"/>
</dbReference>
<dbReference type="EMBL" id="AY158949">
    <property type="protein sequence ID" value="AAO06259.1"/>
    <property type="molecule type" value="Genomic_DNA"/>
</dbReference>
<dbReference type="EMBL" id="AY158950">
    <property type="protein sequence ID" value="AAO06260.1"/>
    <property type="molecule type" value="Genomic_DNA"/>
</dbReference>
<dbReference type="EMBL" id="AY158951">
    <property type="protein sequence ID" value="AAO06261.1"/>
    <property type="molecule type" value="Genomic_DNA"/>
</dbReference>
<dbReference type="EMBL" id="AY158954">
    <property type="protein sequence ID" value="AAO06264.1"/>
    <property type="status" value="ALT_INIT"/>
    <property type="molecule type" value="Genomic_DNA"/>
</dbReference>
<dbReference type="EMBL" id="AY158955">
    <property type="protein sequence ID" value="AAO06265.1"/>
    <property type="molecule type" value="Genomic_DNA"/>
</dbReference>
<dbReference type="EMBL" id="AK010121">
    <property type="protein sequence ID" value="BAB26714.1"/>
    <property type="molecule type" value="mRNA"/>
</dbReference>
<dbReference type="EMBL" id="AK020421">
    <property type="protein sequence ID" value="BAB32097.1"/>
    <property type="molecule type" value="mRNA"/>
</dbReference>
<dbReference type="EMBL" id="AL590388">
    <property type="status" value="NOT_ANNOTATED_CDS"/>
    <property type="molecule type" value="Genomic_DNA"/>
</dbReference>
<dbReference type="EMBL" id="BC015270">
    <property type="protein sequence ID" value="AAH15270.1"/>
    <property type="molecule type" value="mRNA"/>
</dbReference>
<dbReference type="EMBL" id="BC094041">
    <property type="protein sequence ID" value="AAH94041.1"/>
    <property type="status" value="ALT_INIT"/>
    <property type="molecule type" value="mRNA"/>
</dbReference>
<dbReference type="EMBL" id="BC101954">
    <property type="protein sequence ID" value="AAI01955.1"/>
    <property type="molecule type" value="mRNA"/>
</dbReference>
<dbReference type="EMBL" id="BC101955">
    <property type="protein sequence ID" value="AAI01956.1"/>
    <property type="molecule type" value="mRNA"/>
</dbReference>
<dbReference type="EMBL" id="BC101956">
    <property type="protein sequence ID" value="AAI01957.1"/>
    <property type="molecule type" value="mRNA"/>
</dbReference>
<dbReference type="EMBL" id="BC103549">
    <property type="protein sequence ID" value="AAI03550.1"/>
    <property type="molecule type" value="mRNA"/>
</dbReference>
<dbReference type="EMBL" id="BC120800">
    <property type="protein sequence ID" value="AAI20801.1"/>
    <property type="molecule type" value="mRNA"/>
</dbReference>
<dbReference type="EMBL" id="BC120802">
    <property type="protein sequence ID" value="AAI20803.1"/>
    <property type="molecule type" value="mRNA"/>
</dbReference>
<dbReference type="EMBL" id="BC132488">
    <property type="protein sequence ID" value="AAI32489.1"/>
    <property type="molecule type" value="mRNA"/>
</dbReference>
<dbReference type="EMBL" id="BC132490">
    <property type="protein sequence ID" value="AAI32491.1"/>
    <property type="molecule type" value="mRNA"/>
</dbReference>
<dbReference type="EMBL" id="Z30939">
    <property type="protein sequence ID" value="CAA83209.1"/>
    <property type="molecule type" value="mRNA"/>
</dbReference>
<dbReference type="CCDS" id="CCDS17638.1"/>
<dbReference type="CCDS" id="CCDS26344.1"/>
<dbReference type="CCDS" id="CCDS26347.1"/>
<dbReference type="CCDS" id="CCDS26352.1"/>
<dbReference type="CCDS" id="CCDS26362.1"/>
<dbReference type="CCDS" id="CCDS26365.1"/>
<dbReference type="CCDS" id="CCDS38554.2"/>
<dbReference type="CCDS" id="CCDS57240.1"/>
<dbReference type="PIR" id="A39525">
    <property type="entry name" value="A39525"/>
</dbReference>
<dbReference type="PIR" id="JH0304">
    <property type="entry name" value="JH0304"/>
</dbReference>
<dbReference type="PIR" id="S06743">
    <property type="entry name" value="S06743"/>
</dbReference>
<dbReference type="PIR" id="S48060">
    <property type="entry name" value="S45111"/>
</dbReference>
<dbReference type="RefSeq" id="NP_038576.1">
    <property type="nucleotide sequence ID" value="NM_013548.4"/>
</dbReference>
<dbReference type="RefSeq" id="NP_473386.1">
    <property type="nucleotide sequence ID" value="NM_054045.4"/>
</dbReference>
<dbReference type="RefSeq" id="NP_783584.1">
    <property type="nucleotide sequence ID" value="NM_175653.2"/>
</dbReference>
<dbReference type="RefSeq" id="NP_835510.1">
    <property type="nucleotide sequence ID" value="NM_178203.3"/>
</dbReference>
<dbReference type="RefSeq" id="NP_835511.1">
    <property type="nucleotide sequence ID" value="NM_178204.2"/>
</dbReference>
<dbReference type="RefSeq" id="NP_835512.1">
    <property type="nucleotide sequence ID" value="NM_178205.2"/>
</dbReference>
<dbReference type="RefSeq" id="NP_835587.1">
    <property type="nucleotide sequence ID" value="NM_178215.2"/>
</dbReference>
<dbReference type="RefSeq" id="NP_835734.2">
    <property type="nucleotide sequence ID" value="NM_178216.3"/>
</dbReference>
<dbReference type="PDB" id="2V86">
    <property type="method" value="X-ray"/>
    <property type="resolution" value="2.05 A"/>
    <property type="chains" value="D/E=2-9"/>
</dbReference>
<dbReference type="PDB" id="2V87">
    <property type="method" value="X-ray"/>
    <property type="resolution" value="1.80 A"/>
    <property type="chains" value="D/E=2-14"/>
</dbReference>
<dbReference type="PDB" id="2V88">
    <property type="method" value="X-ray"/>
    <property type="resolution" value="2.00 A"/>
    <property type="chains" value="D/F=2-8"/>
</dbReference>
<dbReference type="PDB" id="4QWN">
    <property type="method" value="X-ray"/>
    <property type="resolution" value="2.10 A"/>
    <property type="chains" value="E/F=30-44"/>
</dbReference>
<dbReference type="PDB" id="4QX7">
    <property type="method" value="X-ray"/>
    <property type="resolution" value="2.34 A"/>
    <property type="chains" value="E/F=30-44"/>
</dbReference>
<dbReference type="PDB" id="4QX8">
    <property type="method" value="X-ray"/>
    <property type="resolution" value="1.65 A"/>
    <property type="chains" value="E/F=30-44"/>
</dbReference>
<dbReference type="PDB" id="4QXB">
    <property type="method" value="X-ray"/>
    <property type="resolution" value="1.60 A"/>
    <property type="chains" value="E/F=30-44"/>
</dbReference>
<dbReference type="PDB" id="4QXC">
    <property type="method" value="X-ray"/>
    <property type="resolution" value="1.75 A"/>
    <property type="chains" value="E/F=30-44"/>
</dbReference>
<dbReference type="PDB" id="4QXH">
    <property type="method" value="X-ray"/>
    <property type="resolution" value="2.20 A"/>
    <property type="chains" value="E/F=30-44"/>
</dbReference>
<dbReference type="PDBsum" id="2V86"/>
<dbReference type="PDBsum" id="2V87"/>
<dbReference type="PDBsum" id="2V88"/>
<dbReference type="PDBsum" id="4QWN"/>
<dbReference type="PDBsum" id="4QX7"/>
<dbReference type="PDBsum" id="4QX8"/>
<dbReference type="PDBsum" id="4QXB"/>
<dbReference type="PDBsum" id="4QXC"/>
<dbReference type="PDBsum" id="4QXH"/>
<dbReference type="SMR" id="P84228"/>
<dbReference type="BioGRID" id="200195">
    <property type="interactions" value="1"/>
</dbReference>
<dbReference type="BioGRID" id="220608">
    <property type="interactions" value="1"/>
</dbReference>
<dbReference type="BioGRID" id="234451">
    <property type="interactions" value="7"/>
</dbReference>
<dbReference type="BioGRID" id="235067">
    <property type="interactions" value="1"/>
</dbReference>
<dbReference type="BioGRID" id="235068">
    <property type="interactions" value="6"/>
</dbReference>
<dbReference type="BioGRID" id="235069">
    <property type="interactions" value="5"/>
</dbReference>
<dbReference type="BioGRID" id="235070">
    <property type="interactions" value="2"/>
</dbReference>
<dbReference type="BioGRID" id="235073">
    <property type="interactions" value="4"/>
</dbReference>
<dbReference type="ComplexPortal" id="CPX-5713">
    <property type="entry name" value="Nucleosome, variant H3.2-H2A.2-H2B.1"/>
</dbReference>
<dbReference type="DIP" id="DIP-49015N"/>
<dbReference type="FunCoup" id="P84228">
    <property type="interactions" value="769"/>
</dbReference>
<dbReference type="IntAct" id="P84228">
    <property type="interactions" value="27"/>
</dbReference>
<dbReference type="MINT" id="P84228"/>
<dbReference type="STRING" id="10090.ENSMUSP00000074994"/>
<dbReference type="GlyGen" id="P84228">
    <property type="glycosylation" value="1 site, 1 O-linked glycan (1 site)"/>
</dbReference>
<dbReference type="iPTMnet" id="P84228"/>
<dbReference type="SwissPalm" id="P84228"/>
<dbReference type="jPOST" id="P84228"/>
<dbReference type="PaxDb" id="10090-ENSMUSP00000074994"/>
<dbReference type="Pumba" id="P84228"/>
<dbReference type="TopDownProteomics" id="P84228"/>
<dbReference type="DNASU" id="319149"/>
<dbReference type="Ensembl" id="ENSMUST00000075558.5">
    <property type="protein sequence ID" value="ENSMUSP00000074994.3"/>
    <property type="gene ID" value="ENSMUSG00000100210.3"/>
</dbReference>
<dbReference type="Ensembl" id="ENSMUST00000091703.3">
    <property type="protein sequence ID" value="ENSMUSP00000089295.3"/>
    <property type="gene ID" value="ENSMUSG00000069267.3"/>
</dbReference>
<dbReference type="Ensembl" id="ENSMUST00000091752.5">
    <property type="protein sequence ID" value="ENSMUSP00000089346.3"/>
    <property type="gene ID" value="ENSMUSG00000069310.5"/>
</dbReference>
<dbReference type="Ensembl" id="ENSMUST00000098843.3">
    <property type="protein sequence ID" value="ENSMUSP00000096442.3"/>
    <property type="gene ID" value="ENSMUSG00000074403.3"/>
</dbReference>
<dbReference type="Ensembl" id="ENSMUST00000105105.4">
    <property type="protein sequence ID" value="ENSMUSP00000100737.2"/>
    <property type="gene ID" value="ENSMUSG00000099583.3"/>
</dbReference>
<dbReference type="Ensembl" id="ENSMUST00000105107.2">
    <property type="protein sequence ID" value="ENSMUSP00000100739.2"/>
    <property type="gene ID" value="ENSMUSG00000069273.3"/>
</dbReference>
<dbReference type="Ensembl" id="ENSMUST00000167403.4">
    <property type="protein sequence ID" value="ENSMUSP00000135215.3"/>
    <property type="gene ID" value="ENSMUSG00000081058.6"/>
</dbReference>
<dbReference type="Ensembl" id="ENSMUST00000176059.2">
    <property type="protein sequence ID" value="ENSMUSP00000134751.2"/>
    <property type="gene ID" value="ENSMUSG00000093769.5"/>
</dbReference>
<dbReference type="GeneID" id="15077"/>
<dbReference type="GeneID" id="260423"/>
<dbReference type="GeneID" id="319148"/>
<dbReference type="GeneID" id="319149"/>
<dbReference type="GeneID" id="319150"/>
<dbReference type="GeneID" id="319151"/>
<dbReference type="GeneID" id="319154"/>
<dbReference type="GeneID" id="97114"/>
<dbReference type="KEGG" id="mmu:15077"/>
<dbReference type="KEGG" id="mmu:260423"/>
<dbReference type="KEGG" id="mmu:319148"/>
<dbReference type="KEGG" id="mmu:319149"/>
<dbReference type="KEGG" id="mmu:319150"/>
<dbReference type="KEGG" id="mmu:319151"/>
<dbReference type="KEGG" id="mmu:319154"/>
<dbReference type="KEGG" id="mmu:97114"/>
<dbReference type="UCSC" id="uc007ptz.3">
    <property type="organism name" value="mouse"/>
</dbReference>
<dbReference type="AGR" id="MGI:2448319"/>
<dbReference type="AGR" id="MGI:2448320"/>
<dbReference type="AGR" id="MGI:2448322"/>
<dbReference type="AGR" id="MGI:2448326"/>
<dbReference type="AGR" id="MGI:2448329"/>
<dbReference type="AGR" id="MGI:2448351"/>
<dbReference type="AGR" id="MGI:2448355"/>
<dbReference type="AGR" id="MGI:2448357"/>
<dbReference type="CTD" id="126961"/>
<dbReference type="CTD" id="333932"/>
<dbReference type="CTD" id="653604"/>
<dbReference type="CTD" id="8351"/>
<dbReference type="CTD" id="8352"/>
<dbReference type="CTD" id="8353"/>
<dbReference type="CTD" id="8358"/>
<dbReference type="CTD" id="8968"/>
<dbReference type="MGI" id="MGI:2448351">
    <property type="gene designation" value="H3c13"/>
</dbReference>
<dbReference type="MGI" id="MGI:2448355">
    <property type="gene designation" value="H3c14"/>
</dbReference>
<dbReference type="MGI" id="MGI:2448357">
    <property type="gene designation" value="H3c15"/>
</dbReference>
<dbReference type="MGI" id="MGI:2448319">
    <property type="gene designation" value="H3c2"/>
</dbReference>
<dbReference type="MGI" id="MGI:2448320">
    <property type="gene designation" value="H3c3"/>
</dbReference>
<dbReference type="MGI" id="MGI:2448322">
    <property type="gene designation" value="H3c4"/>
</dbReference>
<dbReference type="MGI" id="MGI:2448326">
    <property type="gene designation" value="H3c6"/>
</dbReference>
<dbReference type="MGI" id="MGI:2448329">
    <property type="gene designation" value="H3c7"/>
</dbReference>
<dbReference type="VEuPathDB" id="HostDB:ENSMUSG00000069267"/>
<dbReference type="VEuPathDB" id="HostDB:ENSMUSG00000069273"/>
<dbReference type="VEuPathDB" id="HostDB:ENSMUSG00000069310"/>
<dbReference type="VEuPathDB" id="HostDB:ENSMUSG00000074403"/>
<dbReference type="VEuPathDB" id="HostDB:ENSMUSG00000081058"/>
<dbReference type="VEuPathDB" id="HostDB:ENSMUSG00000093769"/>
<dbReference type="VEuPathDB" id="HostDB:ENSMUSG00000099583"/>
<dbReference type="VEuPathDB" id="HostDB:ENSMUSG00000100210"/>
<dbReference type="eggNOG" id="KOG1745">
    <property type="taxonomic scope" value="Eukaryota"/>
</dbReference>
<dbReference type="GeneTree" id="ENSGT01130000278271"/>
<dbReference type="HOGENOM" id="CLU_078295_4_0_1"/>
<dbReference type="InParanoid" id="P84228"/>
<dbReference type="OMA" id="THRFKPG"/>
<dbReference type="OrthoDB" id="9609993at2759"/>
<dbReference type="PhylomeDB" id="P84228"/>
<dbReference type="TreeFam" id="TF314241"/>
<dbReference type="Reactome" id="R-MMU-1266695">
    <property type="pathway name" value="Interleukin-7 signaling"/>
</dbReference>
<dbReference type="Reactome" id="R-MMU-212300">
    <property type="pathway name" value="PRC2 methylates histones and DNA"/>
</dbReference>
<dbReference type="Reactome" id="R-MMU-2299718">
    <property type="pathway name" value="Condensation of Prophase Chromosomes"/>
</dbReference>
<dbReference type="Reactome" id="R-MMU-3214815">
    <property type="pathway name" value="HDACs deacetylate histones"/>
</dbReference>
<dbReference type="Reactome" id="R-MMU-3214841">
    <property type="pathway name" value="PKMTs methylate histone lysines"/>
</dbReference>
<dbReference type="Reactome" id="R-MMU-3214842">
    <property type="pathway name" value="HDMs demethylate histones"/>
</dbReference>
<dbReference type="Reactome" id="R-MMU-3214847">
    <property type="pathway name" value="HATs acetylate histones"/>
</dbReference>
<dbReference type="Reactome" id="R-MMU-3214858">
    <property type="pathway name" value="RMTs methylate histone arginines"/>
</dbReference>
<dbReference type="Reactome" id="R-MMU-3247509">
    <property type="pathway name" value="Chromatin modifying enzymes"/>
</dbReference>
<dbReference type="Reactome" id="R-MMU-8936459">
    <property type="pathway name" value="RUNX1 regulates genes involved in megakaryocyte differentiation and platelet function"/>
</dbReference>
<dbReference type="Reactome" id="R-MMU-9018519">
    <property type="pathway name" value="Estrogen-dependent gene expression"/>
</dbReference>
<dbReference type="Reactome" id="R-MMU-983231">
    <property type="pathway name" value="Factors involved in megakaryocyte development and platelet production"/>
</dbReference>
<dbReference type="Reactome" id="R-MMU-9841922">
    <property type="pathway name" value="MLL4 and MLL3 complexes regulate expression of PPARG target genes in adipogenesis and hepatic steatosis"/>
</dbReference>
<dbReference type="Reactome" id="R-MMU-9843940">
    <property type="pathway name" value="Regulation of endogenous retroelements by KRAB-ZFP proteins"/>
</dbReference>
<dbReference type="BioGRID-ORCS" id="15077">
    <property type="hits" value="12 hits in 40 CRISPR screens"/>
</dbReference>
<dbReference type="BioGRID-ORCS" id="260423">
    <property type="hits" value="13 hits in 45 CRISPR screens"/>
</dbReference>
<dbReference type="BioGRID-ORCS" id="319148">
    <property type="hits" value="11 hits in 53 CRISPR screens"/>
</dbReference>
<dbReference type="BioGRID-ORCS" id="319149">
    <property type="hits" value="11 hits in 42 CRISPR screens"/>
</dbReference>
<dbReference type="BioGRID-ORCS" id="319150">
    <property type="hits" value="8 hits in 41 CRISPR screens"/>
</dbReference>
<dbReference type="BioGRID-ORCS" id="319151">
    <property type="hits" value="12 hits in 46 CRISPR screens"/>
</dbReference>
<dbReference type="BioGRID-ORCS" id="319154">
    <property type="hits" value="14 hits in 43 CRISPR screens"/>
</dbReference>
<dbReference type="BioGRID-ORCS" id="97114">
    <property type="hits" value="15 hits in 46 CRISPR screens"/>
</dbReference>
<dbReference type="ChiTaRS" id="Hist2h3c1">
    <property type="organism name" value="mouse"/>
</dbReference>
<dbReference type="ChiTaRS" id="Hist2h3c2">
    <property type="organism name" value="mouse"/>
</dbReference>
<dbReference type="EvolutionaryTrace" id="P84228"/>
<dbReference type="PRO" id="PR:P84228"/>
<dbReference type="Proteomes" id="UP000000589">
    <property type="component" value="Chromosome 13"/>
</dbReference>
<dbReference type="Proteomes" id="UP000000589">
    <property type="component" value="Chromosome 3"/>
</dbReference>
<dbReference type="RNAct" id="P84228">
    <property type="molecule type" value="protein"/>
</dbReference>
<dbReference type="Bgee" id="ENSMUSG00000069267">
    <property type="expression patterns" value="Expressed in uterus and 52 other cell types or tissues"/>
</dbReference>
<dbReference type="ExpressionAtlas" id="P84228">
    <property type="expression patterns" value="baseline and differential"/>
</dbReference>
<dbReference type="GO" id="GO:0000785">
    <property type="term" value="C:chromatin"/>
    <property type="evidence" value="ECO:0000314"/>
    <property type="project" value="MGI"/>
</dbReference>
<dbReference type="GO" id="GO:0005654">
    <property type="term" value="C:nucleoplasm"/>
    <property type="evidence" value="ECO:0000304"/>
    <property type="project" value="Reactome"/>
</dbReference>
<dbReference type="GO" id="GO:0000786">
    <property type="term" value="C:nucleosome"/>
    <property type="evidence" value="ECO:0000266"/>
    <property type="project" value="ComplexPortal"/>
</dbReference>
<dbReference type="GO" id="GO:0005634">
    <property type="term" value="C:nucleus"/>
    <property type="evidence" value="ECO:0000314"/>
    <property type="project" value="MGI"/>
</dbReference>
<dbReference type="GO" id="GO:0003682">
    <property type="term" value="F:chromatin binding"/>
    <property type="evidence" value="ECO:0000314"/>
    <property type="project" value="MGI"/>
</dbReference>
<dbReference type="GO" id="GO:0003677">
    <property type="term" value="F:DNA binding"/>
    <property type="evidence" value="ECO:0000314"/>
    <property type="project" value="MGI"/>
</dbReference>
<dbReference type="GO" id="GO:0046982">
    <property type="term" value="F:protein heterodimerization activity"/>
    <property type="evidence" value="ECO:0007669"/>
    <property type="project" value="InterPro"/>
</dbReference>
<dbReference type="GO" id="GO:0030527">
    <property type="term" value="F:structural constituent of chromatin"/>
    <property type="evidence" value="ECO:0007669"/>
    <property type="project" value="InterPro"/>
</dbReference>
<dbReference type="GO" id="GO:0006325">
    <property type="term" value="P:chromatin organization"/>
    <property type="evidence" value="ECO:0000303"/>
    <property type="project" value="ComplexPortal"/>
</dbReference>
<dbReference type="GO" id="GO:0040029">
    <property type="term" value="P:epigenetic regulation of gene expression"/>
    <property type="evidence" value="ECO:0000250"/>
    <property type="project" value="BHF-UCL"/>
</dbReference>
<dbReference type="GO" id="GO:0010467">
    <property type="term" value="P:gene expression"/>
    <property type="evidence" value="ECO:0000315"/>
    <property type="project" value="MGI"/>
</dbReference>
<dbReference type="GO" id="GO:0000122">
    <property type="term" value="P:negative regulation of transcription by RNA polymerase II"/>
    <property type="evidence" value="ECO:0000314"/>
    <property type="project" value="MGI"/>
</dbReference>
<dbReference type="GO" id="GO:0006334">
    <property type="term" value="P:nucleosome assembly"/>
    <property type="evidence" value="ECO:0007669"/>
    <property type="project" value="Ensembl"/>
</dbReference>
<dbReference type="CDD" id="cd22911">
    <property type="entry name" value="HFD_H3"/>
    <property type="match status" value="1"/>
</dbReference>
<dbReference type="FunFam" id="1.10.20.10:FF:000078">
    <property type="entry name" value="Histone H3"/>
    <property type="match status" value="1"/>
</dbReference>
<dbReference type="FunFam" id="1.10.20.10:FF:000044">
    <property type="entry name" value="Histone H3.3"/>
    <property type="match status" value="1"/>
</dbReference>
<dbReference type="Gene3D" id="1.10.20.10">
    <property type="entry name" value="Histone, subunit A"/>
    <property type="match status" value="1"/>
</dbReference>
<dbReference type="InterPro" id="IPR009072">
    <property type="entry name" value="Histone-fold"/>
</dbReference>
<dbReference type="InterPro" id="IPR007125">
    <property type="entry name" value="Histone_H2A/H2B/H3"/>
</dbReference>
<dbReference type="InterPro" id="IPR000164">
    <property type="entry name" value="Histone_H3/CENP-A"/>
</dbReference>
<dbReference type="PANTHER" id="PTHR11426">
    <property type="entry name" value="HISTONE H3"/>
    <property type="match status" value="1"/>
</dbReference>
<dbReference type="Pfam" id="PF00125">
    <property type="entry name" value="Histone"/>
    <property type="match status" value="1"/>
</dbReference>
<dbReference type="PRINTS" id="PR00622">
    <property type="entry name" value="HISTONEH3"/>
</dbReference>
<dbReference type="SMART" id="SM00428">
    <property type="entry name" value="H3"/>
    <property type="match status" value="1"/>
</dbReference>
<dbReference type="SUPFAM" id="SSF47113">
    <property type="entry name" value="Histone-fold"/>
    <property type="match status" value="1"/>
</dbReference>
<dbReference type="PROSITE" id="PS00322">
    <property type="entry name" value="HISTONE_H3_1"/>
    <property type="match status" value="1"/>
</dbReference>
<dbReference type="PROSITE" id="PS00959">
    <property type="entry name" value="HISTONE_H3_2"/>
    <property type="match status" value="1"/>
</dbReference>
<gene>
    <name evidence="33" type="primary">H3c2</name>
    <name type="synonym">H3-53</name>
    <name type="synonym">H3.2</name>
    <name type="synonym">H3b</name>
    <name evidence="33" type="synonym">Hist1h3b</name>
</gene>
<gene>
    <name evidence="34" type="primary">H3c3</name>
    <name type="synonym">H3-143</name>
    <name evidence="34" type="synonym">Hist1h3c</name>
</gene>
<gene>
    <name evidence="35" type="primary">H3c4</name>
    <name type="synonym">H3-B</name>
    <name evidence="35" type="synonym">Hist1h3d</name>
</gene>
<gene>
    <name evidence="36" type="primary">H3c6</name>
    <name type="synonym">H3-F</name>
    <name evidence="36" type="synonym">Hist1h3e</name>
</gene>
<gene>
    <name evidence="37" type="primary">H3c7</name>
    <name type="synonym">H3.2-221</name>
    <name type="synonym">H3f</name>
    <name evidence="37" type="synonym">Hist1h3f</name>
</gene>
<gene>
    <name evidence="38" type="primary">H3c13</name>
    <name type="synonym">H3.2-616</name>
    <name evidence="38" type="synonym">Hist2h3b</name>
</gene>
<gene>
    <name evidence="39" type="primary">H3c14</name>
    <name type="synonym">H3.2-615</name>
    <name evidence="39" type="synonym">Hist2h3c1</name>
    <name type="synonym">Hist2h3ca1</name>
</gene>
<gene>
    <name evidence="40" type="primary">H3c15</name>
    <name type="synonym">H3.2-614</name>
    <name evidence="40" type="synonym">Hist2h3c2</name>
    <name type="synonym">Hist2h3ca2</name>
</gene>
<proteinExistence type="evidence at protein level"/>